<keyword id="KW-0067">ATP-binding</keyword>
<keyword id="KW-0131">Cell cycle</keyword>
<keyword id="KW-0132">Cell division</keyword>
<keyword id="KW-0133">Cell shape</keyword>
<keyword id="KW-0961">Cell wall biogenesis/degradation</keyword>
<keyword id="KW-0963">Cytoplasm</keyword>
<keyword id="KW-0436">Ligase</keyword>
<keyword id="KW-0547">Nucleotide-binding</keyword>
<keyword id="KW-0573">Peptidoglycan synthesis</keyword>
<keyword id="KW-1185">Reference proteome</keyword>
<comment type="function">
    <text evidence="1">Cell wall formation.</text>
</comment>
<comment type="catalytic activity">
    <reaction evidence="1">
        <text>UDP-N-acetyl-alpha-D-muramate + L-alanine + ATP = UDP-N-acetyl-alpha-D-muramoyl-L-alanine + ADP + phosphate + H(+)</text>
        <dbReference type="Rhea" id="RHEA:23372"/>
        <dbReference type="ChEBI" id="CHEBI:15378"/>
        <dbReference type="ChEBI" id="CHEBI:30616"/>
        <dbReference type="ChEBI" id="CHEBI:43474"/>
        <dbReference type="ChEBI" id="CHEBI:57972"/>
        <dbReference type="ChEBI" id="CHEBI:70757"/>
        <dbReference type="ChEBI" id="CHEBI:83898"/>
        <dbReference type="ChEBI" id="CHEBI:456216"/>
        <dbReference type="EC" id="6.3.2.8"/>
    </reaction>
</comment>
<comment type="pathway">
    <text evidence="1">Cell wall biogenesis; peptidoglycan biosynthesis.</text>
</comment>
<comment type="subcellular location">
    <subcellularLocation>
        <location evidence="1">Cytoplasm</location>
    </subcellularLocation>
</comment>
<comment type="similarity">
    <text evidence="1">Belongs to the MurCDEF family.</text>
</comment>
<feature type="chain" id="PRO_0000242592" description="UDP-N-acetylmuramate--L-alanine ligase">
    <location>
        <begin position="1"/>
        <end position="475"/>
    </location>
</feature>
<feature type="binding site" evidence="1">
    <location>
        <begin position="121"/>
        <end position="127"/>
    </location>
    <ligand>
        <name>ATP</name>
        <dbReference type="ChEBI" id="CHEBI:30616"/>
    </ligand>
</feature>
<accession>Q2S527</accession>
<sequence length="475" mass="51609">MAELRTQPALGRIRQVHMVGIGGIGMSSIAEVLLNRGYDVTGSDLERSDVTERLEAEGATIHEGHAAEQVGTADVVVYSSAVDPDENPETREAERRRISLIPRAEMLGELIRMKFGVGVAGTHGKTTTTSMAGLVVAEGGFDPTVIVGGKVTAFGSNAITGEGDVLVIEADEYDRTFLRLTPSLAVITSIEEDHLDVYEDLAAIQASFTQYANSVPFFGAAILCLDDPNVQAIVGDVERRVVTYGTTRQAEVRGENVRREGMTTRFDVVVRGERLGTIELHVPGMHNVRNALAAVAVGQELEISFERVRDGLGTFTGVRRRFEKKGEVGGITVLDDYAHHPTEIEATLDAAHQGFPDRRVVAVFQPHMYSRTQNFMDEFACSFFNADMLVLTDVYGAREAPIEGVTGGRLAERAEQFGHRAVHYVPEKTDLPGRLQELVGPGDVVLMLGAGDIWRASEAFVELLENDGGTAIERD</sequence>
<evidence type="ECO:0000255" key="1">
    <source>
        <dbReference type="HAMAP-Rule" id="MF_00046"/>
    </source>
</evidence>
<gene>
    <name evidence="1" type="primary">murC</name>
    <name type="ordered locus">SRU_0561</name>
</gene>
<proteinExistence type="inferred from homology"/>
<name>MURC_SALRD</name>
<organism>
    <name type="scientific">Salinibacter ruber (strain DSM 13855 / M31)</name>
    <dbReference type="NCBI Taxonomy" id="309807"/>
    <lineage>
        <taxon>Bacteria</taxon>
        <taxon>Pseudomonadati</taxon>
        <taxon>Rhodothermota</taxon>
        <taxon>Rhodothermia</taxon>
        <taxon>Rhodothermales</taxon>
        <taxon>Salinibacteraceae</taxon>
        <taxon>Salinibacter</taxon>
    </lineage>
</organism>
<dbReference type="EC" id="6.3.2.8" evidence="1"/>
<dbReference type="EMBL" id="CP000159">
    <property type="protein sequence ID" value="ABC45658.1"/>
    <property type="molecule type" value="Genomic_DNA"/>
</dbReference>
<dbReference type="RefSeq" id="WP_011403337.1">
    <property type="nucleotide sequence ID" value="NC_007677.1"/>
</dbReference>
<dbReference type="RefSeq" id="YP_444704.1">
    <property type="nucleotide sequence ID" value="NC_007677.1"/>
</dbReference>
<dbReference type="SMR" id="Q2S527"/>
<dbReference type="STRING" id="309807.SRU_0561"/>
<dbReference type="EnsemblBacteria" id="ABC45658">
    <property type="protein sequence ID" value="ABC45658"/>
    <property type="gene ID" value="SRU_0561"/>
</dbReference>
<dbReference type="KEGG" id="sru:SRU_0561"/>
<dbReference type="PATRIC" id="fig|309807.25.peg.584"/>
<dbReference type="eggNOG" id="COG0773">
    <property type="taxonomic scope" value="Bacteria"/>
</dbReference>
<dbReference type="HOGENOM" id="CLU_028104_2_2_10"/>
<dbReference type="OrthoDB" id="9804126at2"/>
<dbReference type="UniPathway" id="UPA00219"/>
<dbReference type="Proteomes" id="UP000008674">
    <property type="component" value="Chromosome"/>
</dbReference>
<dbReference type="GO" id="GO:0005737">
    <property type="term" value="C:cytoplasm"/>
    <property type="evidence" value="ECO:0007669"/>
    <property type="project" value="UniProtKB-SubCell"/>
</dbReference>
<dbReference type="GO" id="GO:0005524">
    <property type="term" value="F:ATP binding"/>
    <property type="evidence" value="ECO:0007669"/>
    <property type="project" value="UniProtKB-UniRule"/>
</dbReference>
<dbReference type="GO" id="GO:0008763">
    <property type="term" value="F:UDP-N-acetylmuramate-L-alanine ligase activity"/>
    <property type="evidence" value="ECO:0007669"/>
    <property type="project" value="UniProtKB-UniRule"/>
</dbReference>
<dbReference type="GO" id="GO:0051301">
    <property type="term" value="P:cell division"/>
    <property type="evidence" value="ECO:0007669"/>
    <property type="project" value="UniProtKB-KW"/>
</dbReference>
<dbReference type="GO" id="GO:0071555">
    <property type="term" value="P:cell wall organization"/>
    <property type="evidence" value="ECO:0007669"/>
    <property type="project" value="UniProtKB-KW"/>
</dbReference>
<dbReference type="GO" id="GO:0009252">
    <property type="term" value="P:peptidoglycan biosynthetic process"/>
    <property type="evidence" value="ECO:0007669"/>
    <property type="project" value="UniProtKB-UniRule"/>
</dbReference>
<dbReference type="GO" id="GO:0008360">
    <property type="term" value="P:regulation of cell shape"/>
    <property type="evidence" value="ECO:0007669"/>
    <property type="project" value="UniProtKB-KW"/>
</dbReference>
<dbReference type="Gene3D" id="3.90.190.20">
    <property type="entry name" value="Mur ligase, C-terminal domain"/>
    <property type="match status" value="1"/>
</dbReference>
<dbReference type="Gene3D" id="3.40.1190.10">
    <property type="entry name" value="Mur-like, catalytic domain"/>
    <property type="match status" value="1"/>
</dbReference>
<dbReference type="Gene3D" id="3.40.50.720">
    <property type="entry name" value="NAD(P)-binding Rossmann-like Domain"/>
    <property type="match status" value="1"/>
</dbReference>
<dbReference type="HAMAP" id="MF_00046">
    <property type="entry name" value="MurC"/>
    <property type="match status" value="1"/>
</dbReference>
<dbReference type="InterPro" id="IPR036565">
    <property type="entry name" value="Mur-like_cat_sf"/>
</dbReference>
<dbReference type="InterPro" id="IPR004101">
    <property type="entry name" value="Mur_ligase_C"/>
</dbReference>
<dbReference type="InterPro" id="IPR036615">
    <property type="entry name" value="Mur_ligase_C_dom_sf"/>
</dbReference>
<dbReference type="InterPro" id="IPR013221">
    <property type="entry name" value="Mur_ligase_cen"/>
</dbReference>
<dbReference type="InterPro" id="IPR000713">
    <property type="entry name" value="Mur_ligase_N"/>
</dbReference>
<dbReference type="InterPro" id="IPR050061">
    <property type="entry name" value="MurCDEF_pg_biosynth"/>
</dbReference>
<dbReference type="InterPro" id="IPR005758">
    <property type="entry name" value="UDP-N-AcMur_Ala_ligase_MurC"/>
</dbReference>
<dbReference type="NCBIfam" id="TIGR01082">
    <property type="entry name" value="murC"/>
    <property type="match status" value="1"/>
</dbReference>
<dbReference type="PANTHER" id="PTHR43445:SF3">
    <property type="entry name" value="UDP-N-ACETYLMURAMATE--L-ALANINE LIGASE"/>
    <property type="match status" value="1"/>
</dbReference>
<dbReference type="PANTHER" id="PTHR43445">
    <property type="entry name" value="UDP-N-ACETYLMURAMATE--L-ALANINE LIGASE-RELATED"/>
    <property type="match status" value="1"/>
</dbReference>
<dbReference type="Pfam" id="PF01225">
    <property type="entry name" value="Mur_ligase"/>
    <property type="match status" value="1"/>
</dbReference>
<dbReference type="Pfam" id="PF02875">
    <property type="entry name" value="Mur_ligase_C"/>
    <property type="match status" value="1"/>
</dbReference>
<dbReference type="Pfam" id="PF08245">
    <property type="entry name" value="Mur_ligase_M"/>
    <property type="match status" value="1"/>
</dbReference>
<dbReference type="SUPFAM" id="SSF51984">
    <property type="entry name" value="MurCD N-terminal domain"/>
    <property type="match status" value="1"/>
</dbReference>
<dbReference type="SUPFAM" id="SSF53623">
    <property type="entry name" value="MurD-like peptide ligases, catalytic domain"/>
    <property type="match status" value="1"/>
</dbReference>
<dbReference type="SUPFAM" id="SSF53244">
    <property type="entry name" value="MurD-like peptide ligases, peptide-binding domain"/>
    <property type="match status" value="1"/>
</dbReference>
<protein>
    <recommendedName>
        <fullName evidence="1">UDP-N-acetylmuramate--L-alanine ligase</fullName>
        <ecNumber evidence="1">6.3.2.8</ecNumber>
    </recommendedName>
    <alternativeName>
        <fullName evidence="1">UDP-N-acetylmuramoyl-L-alanine synthetase</fullName>
    </alternativeName>
</protein>
<reference key="1">
    <citation type="journal article" date="2005" name="Proc. Natl. Acad. Sci. U.S.A.">
        <title>The genome of Salinibacter ruber: convergence and gene exchange among hyperhalophilic bacteria and archaea.</title>
        <authorList>
            <person name="Mongodin E.F."/>
            <person name="Nelson K.E."/>
            <person name="Daugherty S."/>
            <person name="DeBoy R.T."/>
            <person name="Wister J."/>
            <person name="Khouri H."/>
            <person name="Weidman J."/>
            <person name="Walsh D.A."/>
            <person name="Papke R.T."/>
            <person name="Sanchez Perez G."/>
            <person name="Sharma A.K."/>
            <person name="Nesbo C.L."/>
            <person name="MacLeod D."/>
            <person name="Bapteste E."/>
            <person name="Doolittle W.F."/>
            <person name="Charlebois R.L."/>
            <person name="Legault B."/>
            <person name="Rodriguez-Valera F."/>
        </authorList>
    </citation>
    <scope>NUCLEOTIDE SEQUENCE [LARGE SCALE GENOMIC DNA]</scope>
    <source>
        <strain>DSM 13855 / CECT 5946 / M31</strain>
    </source>
</reference>